<protein>
    <recommendedName>
        <fullName evidence="6">Gelsolin-like protein 1</fullName>
    </recommendedName>
</protein>
<sequence>MGGTSLDPALAEIGKKNGLLVWRINKFVLEPVPEVDHGVFYIGDAYIALYQKYDGCWDVHFWLGKNASTDEIGVAAIKTVEIDDSLGGIPTQHREIQNYESPLFLSYFPDGIRYVSGGYESGYRHVDDQFKNWKPHLFHCKGKRNVRCTEVECEVNSLNLGDVFILDLGKDLYVWMPPESGRLERIKGMARAKNIADHERMGIPKVHILDDVEWDNDSTFWSYFGGVSSVRKVSKGKDDDDNYWKRLTEQITLWKVSDASGAAKVSMVSQGENIRKEQLDPKDAFILDAINGGIFVWIGHECTLEERSKALIWGQNYLKQHHLPRWTQVTRVLESAESTQFTQWFRDWVDEKKKNTFTPLLFQVSDESGLLHVEEIANFTQEDLDGDDVMILDALNSIYVWVGANANANEKKEALNTAKLYLEKDKLPRHKKTAIDTIFQGKEPPTFKKFFPSWDDNLFKNEVRSVQNMRRLLFH</sequence>
<reference evidence="7" key="1">
    <citation type="journal article" date="2008" name="J. Biol. Chem.">
        <title>Caenorhabditis elegans gelsolin-like protein 1 is a novel actin filament-severing protein with four gelsolin-like repeats.</title>
        <authorList>
            <person name="Klaavuniemi T."/>
            <person name="Yamashiro S."/>
            <person name="Ono S."/>
        </authorList>
    </citation>
    <scope>NUCLEOTIDE SEQUENCE [MRNA]</scope>
    <scope>FUNCTION</scope>
    <scope>INTERACTION WITH ACTIN</scope>
</reference>
<reference evidence="7" key="2">
    <citation type="journal article" date="2010" name="Biochemistry">
        <title>Distinct roles of four gelsolin-like domains of Caenorhabditis elegans gelsolin-like protein-1 in actin filament severing, barbed end capping, and phosphoinositide binding.</title>
        <authorList>
            <person name="Liu Z."/>
            <person name="Klaavuniemi T."/>
            <person name="Ono S."/>
        </authorList>
    </citation>
    <scope>NUCLEOTIDE SEQUENCE [MRNA]</scope>
    <scope>FUNCTION</scope>
    <scope>INTERACTION WITH ACTIN</scope>
</reference>
<reference evidence="9" key="3">
    <citation type="journal article" date="1998" name="Science">
        <title>Genome sequence of the nematode C. elegans: a platform for investigating biology.</title>
        <authorList>
            <consortium name="The C. elegans sequencing consortium"/>
        </authorList>
    </citation>
    <scope>NUCLEOTIDE SEQUENCE [LARGE SCALE GENOMIC DNA]</scope>
    <source>
        <strain>Bristol N2</strain>
    </source>
</reference>
<reference key="4">
    <citation type="journal article" date="2015" name="Cell Rep.">
        <title>The cell death pathway regulates synapse elimination through cleavage of gelsolin in Caenorhabditis elegans neurons.</title>
        <authorList>
            <person name="Meng L."/>
            <person name="Mulcahy B."/>
            <person name="Cook S.J."/>
            <person name="Neubauer M."/>
            <person name="Wan A."/>
            <person name="Jin Y."/>
            <person name="Yan D."/>
        </authorList>
    </citation>
    <scope>FUNCTION</scope>
    <scope>PROTEOLYTIC CLEAVAGE</scope>
    <scope>MUTAGENESIS OF 387-ASP--ILE-391 AND ASP-388</scope>
</reference>
<gene>
    <name evidence="10" type="primary">gsnl-1</name>
    <name type="ORF">K06A4.3</name>
</gene>
<proteinExistence type="evidence at protein level"/>
<accession>Q21253</accession>
<evidence type="ECO:0000250" key="1">
    <source>
        <dbReference type="UniProtKB" id="Q07171"/>
    </source>
</evidence>
<evidence type="ECO:0000255" key="2"/>
<evidence type="ECO:0000269" key="3">
    <source>
    </source>
</evidence>
<evidence type="ECO:0000269" key="4">
    <source>
    </source>
</evidence>
<evidence type="ECO:0000269" key="5">
    <source>
    </source>
</evidence>
<evidence type="ECO:0000303" key="6">
    <source>
    </source>
</evidence>
<evidence type="ECO:0000305" key="7"/>
<evidence type="ECO:0000305" key="8">
    <source>
    </source>
</evidence>
<evidence type="ECO:0000312" key="9">
    <source>
        <dbReference type="EMBL" id="CAA94782.1"/>
    </source>
</evidence>
<evidence type="ECO:0000312" key="10">
    <source>
        <dbReference type="WormBase" id="K06A4.3"/>
    </source>
</evidence>
<organism>
    <name type="scientific">Caenorhabditis elegans</name>
    <dbReference type="NCBI Taxonomy" id="6239"/>
    <lineage>
        <taxon>Eukaryota</taxon>
        <taxon>Metazoa</taxon>
        <taxon>Ecdysozoa</taxon>
        <taxon>Nematoda</taxon>
        <taxon>Chromadorea</taxon>
        <taxon>Rhabditida</taxon>
        <taxon>Rhabditina</taxon>
        <taxon>Rhabditomorpha</taxon>
        <taxon>Rhabditoidea</taxon>
        <taxon>Rhabditidae</taxon>
        <taxon>Peloderinae</taxon>
        <taxon>Caenorhabditis</taxon>
    </lineage>
</organism>
<name>GELS1_CAEEL</name>
<feature type="chain" id="PRO_0000412119" description="Gelsolin-like protein 1">
    <location>
        <begin position="1"/>
        <end position="475"/>
    </location>
</feature>
<feature type="repeat" description="Gelsolin-like 1" evidence="2">
    <location>
        <begin position="27"/>
        <end position="105"/>
    </location>
</feature>
<feature type="repeat" description="Gelsolin-like 2" evidence="2">
    <location>
        <begin position="148"/>
        <end position="208"/>
    </location>
</feature>
<feature type="repeat" description="Gelsolin-like 3" evidence="2">
    <location>
        <begin position="275"/>
        <end position="341"/>
    </location>
</feature>
<feature type="repeat" description="Gelsolin-like 4" evidence="2">
    <location>
        <begin position="375"/>
        <end position="447"/>
    </location>
</feature>
<feature type="region of interest" description="Necessary for barbed end capping activity" evidence="4">
    <location>
        <begin position="1"/>
        <end position="239"/>
    </location>
</feature>
<feature type="region of interest" description="Actin binding, actin severing, Ca-sensitive" evidence="4">
    <location>
        <begin position="1"/>
        <end position="131"/>
    </location>
</feature>
<feature type="region of interest" description="Actin-actin interfilament contact point" evidence="1">
    <location>
        <begin position="70"/>
        <end position="73"/>
    </location>
</feature>
<feature type="region of interest" description="Required for synapse elimination during development" evidence="8">
    <location>
        <begin position="106"/>
        <end position="147"/>
    </location>
</feature>
<feature type="region of interest" description="Required for phosphatidylinositol 4,5-bisphosphate binding and regulation" evidence="4">
    <location>
        <begin position="133"/>
        <end position="227"/>
    </location>
</feature>
<feature type="region of interest" description="F- and G-actin binding, Ca-independent" evidence="4">
    <location>
        <begin position="240"/>
        <end position="475"/>
    </location>
</feature>
<feature type="region of interest" description="Inhibitory for phosphatidylinositol 4,5-bisphosphate binding activity" evidence="4">
    <location>
        <begin position="248"/>
        <end position="348"/>
    </location>
</feature>
<feature type="site" description="Cleavage; probably by ced-3" evidence="5">
    <location>
        <begin position="388"/>
        <end position="389"/>
    </location>
</feature>
<feature type="mutagenesis site" description="Loss of processing. Impaired elimination of synapses in adults." evidence="5">
    <location>
        <begin position="387"/>
        <end position="391"/>
    </location>
</feature>
<feature type="mutagenesis site" description="Loss of processing." evidence="5">
    <original>D</original>
    <variation>A</variation>
    <location>
        <position position="388"/>
    </location>
</feature>
<keyword id="KW-0117">Actin capping</keyword>
<keyword id="KW-0009">Actin-binding</keyword>
<keyword id="KW-0106">Calcium</keyword>
<keyword id="KW-0963">Cytoplasm</keyword>
<keyword id="KW-0206">Cytoskeleton</keyword>
<keyword id="KW-1185">Reference proteome</keyword>
<keyword id="KW-0677">Repeat</keyword>
<dbReference type="EMBL" id="Z70755">
    <property type="protein sequence ID" value="CAA94782.1"/>
    <property type="molecule type" value="Genomic_DNA"/>
</dbReference>
<dbReference type="PIR" id="T23355">
    <property type="entry name" value="T23355"/>
</dbReference>
<dbReference type="RefSeq" id="NP_505448.1">
    <property type="nucleotide sequence ID" value="NM_073047.8"/>
</dbReference>
<dbReference type="SMR" id="Q21253"/>
<dbReference type="BioGRID" id="44366">
    <property type="interactions" value="4"/>
</dbReference>
<dbReference type="FunCoup" id="Q21253">
    <property type="interactions" value="106"/>
</dbReference>
<dbReference type="IntAct" id="Q21253">
    <property type="interactions" value="1"/>
</dbReference>
<dbReference type="STRING" id="6239.K06A4.3.1"/>
<dbReference type="PaxDb" id="6239-K06A4.3"/>
<dbReference type="PeptideAtlas" id="Q21253"/>
<dbReference type="EnsemblMetazoa" id="K06A4.3.1">
    <property type="protein sequence ID" value="K06A4.3.1"/>
    <property type="gene ID" value="WBGene00010593"/>
</dbReference>
<dbReference type="GeneID" id="179328"/>
<dbReference type="KEGG" id="cel:CELE_K06A4.3"/>
<dbReference type="UCSC" id="K06A4.3">
    <property type="organism name" value="c. elegans"/>
</dbReference>
<dbReference type="AGR" id="WB:WBGene00010593"/>
<dbReference type="CTD" id="179328"/>
<dbReference type="WormBase" id="K06A4.3">
    <property type="protein sequence ID" value="CE06107"/>
    <property type="gene ID" value="WBGene00010593"/>
    <property type="gene designation" value="gsnl-1"/>
</dbReference>
<dbReference type="eggNOG" id="KOG0443">
    <property type="taxonomic scope" value="Eukaryota"/>
</dbReference>
<dbReference type="GeneTree" id="ENSGT00940000173475"/>
<dbReference type="HOGENOM" id="CLU_002568_0_0_1"/>
<dbReference type="InParanoid" id="Q21253"/>
<dbReference type="OMA" id="TQWASSW"/>
<dbReference type="OrthoDB" id="6375767at2759"/>
<dbReference type="PhylomeDB" id="Q21253"/>
<dbReference type="Reactome" id="R-CEL-264870">
    <property type="pathway name" value="Caspase-mediated cleavage of cytoskeletal proteins"/>
</dbReference>
<dbReference type="Reactome" id="R-CEL-6798695">
    <property type="pathway name" value="Neutrophil degranulation"/>
</dbReference>
<dbReference type="PRO" id="PR:Q21253"/>
<dbReference type="Proteomes" id="UP000001940">
    <property type="component" value="Chromosome V"/>
</dbReference>
<dbReference type="Bgee" id="WBGene00010593">
    <property type="expression patterns" value="Expressed in larva and 4 other cell types or tissues"/>
</dbReference>
<dbReference type="GO" id="GO:0015629">
    <property type="term" value="C:actin cytoskeleton"/>
    <property type="evidence" value="ECO:0007005"/>
    <property type="project" value="WormBase"/>
</dbReference>
<dbReference type="GO" id="GO:0005737">
    <property type="term" value="C:cytoplasm"/>
    <property type="evidence" value="ECO:0000318"/>
    <property type="project" value="GO_Central"/>
</dbReference>
<dbReference type="GO" id="GO:0055120">
    <property type="term" value="C:striated muscle dense body"/>
    <property type="evidence" value="ECO:0007005"/>
    <property type="project" value="WormBase"/>
</dbReference>
<dbReference type="GO" id="GO:0051015">
    <property type="term" value="F:actin filament binding"/>
    <property type="evidence" value="ECO:0000314"/>
    <property type="project" value="WormBase"/>
</dbReference>
<dbReference type="GO" id="GO:0003785">
    <property type="term" value="F:actin monomer binding"/>
    <property type="evidence" value="ECO:0000314"/>
    <property type="project" value="WormBase"/>
</dbReference>
<dbReference type="GO" id="GO:0005546">
    <property type="term" value="F:phosphatidylinositol-4,5-bisphosphate binding"/>
    <property type="evidence" value="ECO:0000314"/>
    <property type="project" value="WormBase"/>
</dbReference>
<dbReference type="GO" id="GO:0030042">
    <property type="term" value="P:actin filament depolymerization"/>
    <property type="evidence" value="ECO:0000315"/>
    <property type="project" value="UniProtKB"/>
</dbReference>
<dbReference type="GO" id="GO:0051014">
    <property type="term" value="P:actin filament severing"/>
    <property type="evidence" value="ECO:0000314"/>
    <property type="project" value="WormBase"/>
</dbReference>
<dbReference type="GO" id="GO:0008154">
    <property type="term" value="P:actin polymerization or depolymerization"/>
    <property type="evidence" value="ECO:0000318"/>
    <property type="project" value="GO_Central"/>
</dbReference>
<dbReference type="GO" id="GO:0051016">
    <property type="term" value="P:barbed-end actin filament capping"/>
    <property type="evidence" value="ECO:0000314"/>
    <property type="project" value="WormBase"/>
</dbReference>
<dbReference type="GO" id="GO:1905808">
    <property type="term" value="P:positive regulation of synapse pruning"/>
    <property type="evidence" value="ECO:0000315"/>
    <property type="project" value="UniProtKB"/>
</dbReference>
<dbReference type="CDD" id="cd11290">
    <property type="entry name" value="gelsolin_S1_like"/>
    <property type="match status" value="1"/>
</dbReference>
<dbReference type="CDD" id="cd11289">
    <property type="entry name" value="gelsolin_S2_like"/>
    <property type="match status" value="1"/>
</dbReference>
<dbReference type="CDD" id="cd11292">
    <property type="entry name" value="gelsolin_S3_like"/>
    <property type="match status" value="1"/>
</dbReference>
<dbReference type="CDD" id="cd11291">
    <property type="entry name" value="gelsolin_S6_like"/>
    <property type="match status" value="1"/>
</dbReference>
<dbReference type="FunFam" id="3.40.20.10:FF:000005">
    <property type="entry name" value="Gelsolin"/>
    <property type="match status" value="1"/>
</dbReference>
<dbReference type="FunFam" id="3.40.20.10:FF:000121">
    <property type="entry name" value="Gelsolin-like protein 1"/>
    <property type="match status" value="1"/>
</dbReference>
<dbReference type="Gene3D" id="3.40.20.10">
    <property type="entry name" value="Severin"/>
    <property type="match status" value="4"/>
</dbReference>
<dbReference type="InterPro" id="IPR029006">
    <property type="entry name" value="ADF-H/Gelsolin-like_dom_sf"/>
</dbReference>
<dbReference type="InterPro" id="IPR007123">
    <property type="entry name" value="Gelsolin-like_dom"/>
</dbReference>
<dbReference type="InterPro" id="IPR007122">
    <property type="entry name" value="Villin/Gelsolin"/>
</dbReference>
<dbReference type="PANTHER" id="PTHR11977:SF123">
    <property type="entry name" value="GELSOLIN"/>
    <property type="match status" value="1"/>
</dbReference>
<dbReference type="PANTHER" id="PTHR11977">
    <property type="entry name" value="VILLIN"/>
    <property type="match status" value="1"/>
</dbReference>
<dbReference type="Pfam" id="PF00626">
    <property type="entry name" value="Gelsolin"/>
    <property type="match status" value="4"/>
</dbReference>
<dbReference type="PRINTS" id="PR00597">
    <property type="entry name" value="GELSOLIN"/>
</dbReference>
<dbReference type="SMART" id="SM00262">
    <property type="entry name" value="GEL"/>
    <property type="match status" value="4"/>
</dbReference>
<dbReference type="SUPFAM" id="SSF55753">
    <property type="entry name" value="Actin depolymerizing proteins"/>
    <property type="match status" value="4"/>
</dbReference>
<comment type="function">
    <text evidence="3 4 5">Calcium-regulated, actin-modulating protein that binds to the plus (or barbed) ends of actin monomers or filaments, preventing monomer exchange (end-blocking or capping) (PubMed:18640981, PubMed:20392036). Binds actin but does not nucleate actin polymerization, albeit slows down elongation by blocking the barbed ends (PubMed:18640981, PubMed:20392036). By promoting actin depolymerization, required for the elimination of presynaptic components downstream of the egl-1, ced-4 and ced-3 apoptotic pathway during larval development (PubMed:26074078).</text>
</comment>
<comment type="subunit">
    <text evidence="3 4">Monomer. Binds to actin monomers and filaments.</text>
</comment>
<comment type="subcellular location">
    <subcellularLocation>
        <location evidence="1">Cytoplasm</location>
        <location evidence="1">Cytoskeleton</location>
    </subcellularLocation>
</comment>
<comment type="PTM">
    <text evidence="5">Cleavage by caspase ced-3 activates its actin-severing function and is required for the elimination of presynaptic components during development.</text>
</comment>
<comment type="similarity">
    <text evidence="2">Belongs to the villin/gelsolin family.</text>
</comment>